<name>RS17_YERPB</name>
<organism>
    <name type="scientific">Yersinia pseudotuberculosis serotype IB (strain PB1/+)</name>
    <dbReference type="NCBI Taxonomy" id="502801"/>
    <lineage>
        <taxon>Bacteria</taxon>
        <taxon>Pseudomonadati</taxon>
        <taxon>Pseudomonadota</taxon>
        <taxon>Gammaproteobacteria</taxon>
        <taxon>Enterobacterales</taxon>
        <taxon>Yersiniaceae</taxon>
        <taxon>Yersinia</taxon>
    </lineage>
</organism>
<comment type="function">
    <text evidence="1">One of the primary rRNA binding proteins, it binds specifically to the 5'-end of 16S ribosomal RNA.</text>
</comment>
<comment type="subunit">
    <text evidence="1">Part of the 30S ribosomal subunit.</text>
</comment>
<comment type="similarity">
    <text evidence="1">Belongs to the universal ribosomal protein uS17 family.</text>
</comment>
<gene>
    <name evidence="1" type="primary">rpsQ</name>
    <name type="ordered locus">YPTS_3881</name>
</gene>
<evidence type="ECO:0000255" key="1">
    <source>
        <dbReference type="HAMAP-Rule" id="MF_01345"/>
    </source>
</evidence>
<evidence type="ECO:0000305" key="2"/>
<reference key="1">
    <citation type="submission" date="2008-04" db="EMBL/GenBank/DDBJ databases">
        <title>Complete sequence of Yersinia pseudotuberculosis PB1/+.</title>
        <authorList>
            <person name="Copeland A."/>
            <person name="Lucas S."/>
            <person name="Lapidus A."/>
            <person name="Glavina del Rio T."/>
            <person name="Dalin E."/>
            <person name="Tice H."/>
            <person name="Bruce D."/>
            <person name="Goodwin L."/>
            <person name="Pitluck S."/>
            <person name="Munk A.C."/>
            <person name="Brettin T."/>
            <person name="Detter J.C."/>
            <person name="Han C."/>
            <person name="Tapia R."/>
            <person name="Schmutz J."/>
            <person name="Larimer F."/>
            <person name="Land M."/>
            <person name="Hauser L."/>
            <person name="Challacombe J.F."/>
            <person name="Green L."/>
            <person name="Lindler L.E."/>
            <person name="Nikolich M.P."/>
            <person name="Richardson P."/>
        </authorList>
    </citation>
    <scope>NUCLEOTIDE SEQUENCE [LARGE SCALE GENOMIC DNA]</scope>
    <source>
        <strain>PB1/+</strain>
    </source>
</reference>
<proteinExistence type="inferred from homology"/>
<accession>B2K5M1</accession>
<keyword id="KW-0687">Ribonucleoprotein</keyword>
<keyword id="KW-0689">Ribosomal protein</keyword>
<keyword id="KW-0694">RNA-binding</keyword>
<keyword id="KW-0699">rRNA-binding</keyword>
<feature type="chain" id="PRO_1000143327" description="Small ribosomal subunit protein uS17">
    <location>
        <begin position="1"/>
        <end position="84"/>
    </location>
</feature>
<protein>
    <recommendedName>
        <fullName evidence="1">Small ribosomal subunit protein uS17</fullName>
    </recommendedName>
    <alternativeName>
        <fullName evidence="2">30S ribosomal protein S17</fullName>
    </alternativeName>
</protein>
<sequence>MTDQIRTLQGRVVSDKMEKSMVVAIERVVKHPIYGKFIRRTTKLHVHDENNECGIGDVVEIRECRPLSKTKSWTLVRVVEKAIL</sequence>
<dbReference type="EMBL" id="CP001048">
    <property type="protein sequence ID" value="ACC90830.1"/>
    <property type="molecule type" value="Genomic_DNA"/>
</dbReference>
<dbReference type="RefSeq" id="WP_002228135.1">
    <property type="nucleotide sequence ID" value="NZ_CP009780.1"/>
</dbReference>
<dbReference type="SMR" id="B2K5M1"/>
<dbReference type="GeneID" id="97454240"/>
<dbReference type="KEGG" id="ypb:YPTS_3881"/>
<dbReference type="PATRIC" id="fig|502801.10.peg.3346"/>
<dbReference type="GO" id="GO:0022627">
    <property type="term" value="C:cytosolic small ribosomal subunit"/>
    <property type="evidence" value="ECO:0007669"/>
    <property type="project" value="TreeGrafter"/>
</dbReference>
<dbReference type="GO" id="GO:0019843">
    <property type="term" value="F:rRNA binding"/>
    <property type="evidence" value="ECO:0007669"/>
    <property type="project" value="UniProtKB-UniRule"/>
</dbReference>
<dbReference type="GO" id="GO:0003735">
    <property type="term" value="F:structural constituent of ribosome"/>
    <property type="evidence" value="ECO:0007669"/>
    <property type="project" value="InterPro"/>
</dbReference>
<dbReference type="GO" id="GO:0006412">
    <property type="term" value="P:translation"/>
    <property type="evidence" value="ECO:0007669"/>
    <property type="project" value="UniProtKB-UniRule"/>
</dbReference>
<dbReference type="CDD" id="cd00364">
    <property type="entry name" value="Ribosomal_uS17"/>
    <property type="match status" value="1"/>
</dbReference>
<dbReference type="FunFam" id="2.40.50.140:FF:000014">
    <property type="entry name" value="30S ribosomal protein S17"/>
    <property type="match status" value="1"/>
</dbReference>
<dbReference type="Gene3D" id="2.40.50.140">
    <property type="entry name" value="Nucleic acid-binding proteins"/>
    <property type="match status" value="1"/>
</dbReference>
<dbReference type="HAMAP" id="MF_01345_B">
    <property type="entry name" value="Ribosomal_uS17_B"/>
    <property type="match status" value="1"/>
</dbReference>
<dbReference type="InterPro" id="IPR012340">
    <property type="entry name" value="NA-bd_OB-fold"/>
</dbReference>
<dbReference type="InterPro" id="IPR000266">
    <property type="entry name" value="Ribosomal_uS17"/>
</dbReference>
<dbReference type="InterPro" id="IPR019984">
    <property type="entry name" value="Ribosomal_uS17_bact/chlr"/>
</dbReference>
<dbReference type="InterPro" id="IPR019979">
    <property type="entry name" value="Ribosomal_uS17_CS"/>
</dbReference>
<dbReference type="NCBIfam" id="NF004123">
    <property type="entry name" value="PRK05610.1"/>
    <property type="match status" value="1"/>
</dbReference>
<dbReference type="NCBIfam" id="TIGR03635">
    <property type="entry name" value="uS17_bact"/>
    <property type="match status" value="1"/>
</dbReference>
<dbReference type="PANTHER" id="PTHR10744">
    <property type="entry name" value="40S RIBOSOMAL PROTEIN S11 FAMILY MEMBER"/>
    <property type="match status" value="1"/>
</dbReference>
<dbReference type="PANTHER" id="PTHR10744:SF1">
    <property type="entry name" value="SMALL RIBOSOMAL SUBUNIT PROTEIN US17M"/>
    <property type="match status" value="1"/>
</dbReference>
<dbReference type="Pfam" id="PF00366">
    <property type="entry name" value="Ribosomal_S17"/>
    <property type="match status" value="1"/>
</dbReference>
<dbReference type="PRINTS" id="PR00973">
    <property type="entry name" value="RIBOSOMALS17"/>
</dbReference>
<dbReference type="SUPFAM" id="SSF50249">
    <property type="entry name" value="Nucleic acid-binding proteins"/>
    <property type="match status" value="1"/>
</dbReference>
<dbReference type="PROSITE" id="PS00056">
    <property type="entry name" value="RIBOSOMAL_S17"/>
    <property type="match status" value="1"/>
</dbReference>